<reference key="1">
    <citation type="journal article" date="2009" name="Proc. Natl. Acad. Sci. U.S.A.">
        <title>Biogeography of the Sulfolobus islandicus pan-genome.</title>
        <authorList>
            <person name="Reno M.L."/>
            <person name="Held N.L."/>
            <person name="Fields C.J."/>
            <person name="Burke P.V."/>
            <person name="Whitaker R.J."/>
        </authorList>
    </citation>
    <scope>NUCLEOTIDE SEQUENCE [LARGE SCALE GENOMIC DNA]</scope>
    <source>
        <strain>M.16.27</strain>
    </source>
</reference>
<gene>
    <name evidence="1" type="primary">rps4</name>
    <name type="ordered locus">M1627_2126</name>
</gene>
<proteinExistence type="inferred from homology"/>
<feature type="chain" id="PRO_1000214303" description="Small ribosomal subunit protein uS4">
    <location>
        <begin position="1"/>
        <end position="181"/>
    </location>
</feature>
<feature type="domain" description="S4 RNA-binding" evidence="1">
    <location>
        <begin position="104"/>
        <end position="166"/>
    </location>
</feature>
<organism>
    <name type="scientific">Saccharolobus islandicus (strain M.16.27)</name>
    <name type="common">Sulfolobus islandicus</name>
    <dbReference type="NCBI Taxonomy" id="427318"/>
    <lineage>
        <taxon>Archaea</taxon>
        <taxon>Thermoproteota</taxon>
        <taxon>Thermoprotei</taxon>
        <taxon>Sulfolobales</taxon>
        <taxon>Sulfolobaceae</taxon>
        <taxon>Saccharolobus</taxon>
    </lineage>
</organism>
<comment type="function">
    <text evidence="1">One of the primary rRNA binding proteins, it binds directly to 16S rRNA where it nucleates assembly of the body of the 30S subunit.</text>
</comment>
<comment type="function">
    <text evidence="1">With S5 and S12 plays an important role in translational accuracy.</text>
</comment>
<comment type="subunit">
    <text evidence="1">Part of the 30S ribosomal subunit. Contacts protein S5. The interaction surface between S4 and S5 is involved in control of translational fidelity.</text>
</comment>
<comment type="similarity">
    <text evidence="1">Belongs to the universal ribosomal protein uS4 family.</text>
</comment>
<evidence type="ECO:0000255" key="1">
    <source>
        <dbReference type="HAMAP-Rule" id="MF_01306"/>
    </source>
</evidence>
<evidence type="ECO:0000305" key="2"/>
<keyword id="KW-0687">Ribonucleoprotein</keyword>
<keyword id="KW-0689">Ribosomal protein</keyword>
<keyword id="KW-0694">RNA-binding</keyword>
<keyword id="KW-0699">rRNA-binding</keyword>
<dbReference type="EMBL" id="CP001401">
    <property type="protein sequence ID" value="ACP55992.1"/>
    <property type="molecule type" value="Genomic_DNA"/>
</dbReference>
<dbReference type="RefSeq" id="WP_012712013.1">
    <property type="nucleotide sequence ID" value="NC_012632.1"/>
</dbReference>
<dbReference type="SMR" id="C3N052"/>
<dbReference type="KEGG" id="sim:M1627_2126"/>
<dbReference type="HOGENOM" id="CLU_089738_1_1_2"/>
<dbReference type="Proteomes" id="UP000002307">
    <property type="component" value="Chromosome"/>
</dbReference>
<dbReference type="GO" id="GO:0015935">
    <property type="term" value="C:small ribosomal subunit"/>
    <property type="evidence" value="ECO:0007669"/>
    <property type="project" value="InterPro"/>
</dbReference>
<dbReference type="GO" id="GO:0019843">
    <property type="term" value="F:rRNA binding"/>
    <property type="evidence" value="ECO:0007669"/>
    <property type="project" value="UniProtKB-UniRule"/>
</dbReference>
<dbReference type="GO" id="GO:0003735">
    <property type="term" value="F:structural constituent of ribosome"/>
    <property type="evidence" value="ECO:0007669"/>
    <property type="project" value="InterPro"/>
</dbReference>
<dbReference type="GO" id="GO:0042274">
    <property type="term" value="P:ribosomal small subunit biogenesis"/>
    <property type="evidence" value="ECO:0007669"/>
    <property type="project" value="TreeGrafter"/>
</dbReference>
<dbReference type="GO" id="GO:0006412">
    <property type="term" value="P:translation"/>
    <property type="evidence" value="ECO:0007669"/>
    <property type="project" value="UniProtKB-UniRule"/>
</dbReference>
<dbReference type="CDD" id="cd00165">
    <property type="entry name" value="S4"/>
    <property type="match status" value="1"/>
</dbReference>
<dbReference type="FunFam" id="3.10.290.10:FF:000026">
    <property type="entry name" value="30S ribosomal protein S4"/>
    <property type="match status" value="1"/>
</dbReference>
<dbReference type="Gene3D" id="3.10.290.10">
    <property type="entry name" value="RNA-binding S4 domain"/>
    <property type="match status" value="1"/>
</dbReference>
<dbReference type="HAMAP" id="MF_01306_A">
    <property type="entry name" value="Ribosomal_uS4_A"/>
    <property type="match status" value="1"/>
</dbReference>
<dbReference type="InterPro" id="IPR022801">
    <property type="entry name" value="Ribosomal_uS4"/>
</dbReference>
<dbReference type="InterPro" id="IPR022802">
    <property type="entry name" value="Ribosomal_uS4_arc"/>
</dbReference>
<dbReference type="InterPro" id="IPR018079">
    <property type="entry name" value="Ribosomal_uS4_CS"/>
</dbReference>
<dbReference type="InterPro" id="IPR005710">
    <property type="entry name" value="Ribosomal_uS4_euk/arc"/>
</dbReference>
<dbReference type="InterPro" id="IPR001912">
    <property type="entry name" value="Ribosomal_uS4_N"/>
</dbReference>
<dbReference type="InterPro" id="IPR002942">
    <property type="entry name" value="S4_RNA-bd"/>
</dbReference>
<dbReference type="InterPro" id="IPR036986">
    <property type="entry name" value="S4_RNA-bd_sf"/>
</dbReference>
<dbReference type="NCBIfam" id="NF003139">
    <property type="entry name" value="PRK04051.1"/>
    <property type="match status" value="1"/>
</dbReference>
<dbReference type="NCBIfam" id="TIGR01018">
    <property type="entry name" value="uS4_arch"/>
    <property type="match status" value="1"/>
</dbReference>
<dbReference type="PANTHER" id="PTHR11831">
    <property type="entry name" value="30S 40S RIBOSOMAL PROTEIN"/>
    <property type="match status" value="1"/>
</dbReference>
<dbReference type="PANTHER" id="PTHR11831:SF5">
    <property type="entry name" value="40S RIBOSOMAL PROTEIN S9"/>
    <property type="match status" value="1"/>
</dbReference>
<dbReference type="Pfam" id="PF00163">
    <property type="entry name" value="Ribosomal_S4"/>
    <property type="match status" value="1"/>
</dbReference>
<dbReference type="Pfam" id="PF01479">
    <property type="entry name" value="S4"/>
    <property type="match status" value="1"/>
</dbReference>
<dbReference type="SMART" id="SM01390">
    <property type="entry name" value="Ribosomal_S4"/>
    <property type="match status" value="1"/>
</dbReference>
<dbReference type="SMART" id="SM00363">
    <property type="entry name" value="S4"/>
    <property type="match status" value="1"/>
</dbReference>
<dbReference type="SUPFAM" id="SSF55174">
    <property type="entry name" value="Alpha-L RNA-binding motif"/>
    <property type="match status" value="1"/>
</dbReference>
<dbReference type="PROSITE" id="PS00632">
    <property type="entry name" value="RIBOSOMAL_S4"/>
    <property type="match status" value="1"/>
</dbReference>
<dbReference type="PROSITE" id="PS50889">
    <property type="entry name" value="S4"/>
    <property type="match status" value="1"/>
</dbReference>
<name>RS4_SACI3</name>
<sequence length="181" mass="20688">MGDPKKSRKKWESPGHPWIKERIGYEQELLGKYGLRNKREIWIAQSIIRKFRHQARSLLALPPAERAVREKQLVGKLLKMGLLKRETATVDDILSLTEQDLLERRLQTIVYKKGLANTTYQARQLIIHGHIAVNGKRVTSPGYIVNVDEENLIDYYVTSSFKSRPPVMAQQEGGEAGVKQA</sequence>
<accession>C3N052</accession>
<protein>
    <recommendedName>
        <fullName evidence="1">Small ribosomal subunit protein uS4</fullName>
    </recommendedName>
    <alternativeName>
        <fullName evidence="2">30S ribosomal protein S4</fullName>
    </alternativeName>
</protein>